<feature type="chain" id="PRO_1000199313" description="Phenylalanine--tRNA ligase alpha subunit">
    <location>
        <begin position="1"/>
        <end position="327"/>
    </location>
</feature>
<feature type="binding site" evidence="1">
    <location>
        <position position="253"/>
    </location>
    <ligand>
        <name>Mg(2+)</name>
        <dbReference type="ChEBI" id="CHEBI:18420"/>
        <note>shared with beta subunit</note>
    </ligand>
</feature>
<protein>
    <recommendedName>
        <fullName evidence="1">Phenylalanine--tRNA ligase alpha subunit</fullName>
        <ecNumber evidence="1">6.1.1.20</ecNumber>
    </recommendedName>
    <alternativeName>
        <fullName evidence="1">Phenylalanyl-tRNA synthetase alpha subunit</fullName>
        <shortName evidence="1">PheRS</shortName>
    </alternativeName>
</protein>
<dbReference type="EC" id="6.1.1.20" evidence="1"/>
<dbReference type="EMBL" id="CP001154">
    <property type="protein sequence ID" value="ACO75734.1"/>
    <property type="molecule type" value="Genomic_DNA"/>
</dbReference>
<dbReference type="RefSeq" id="WP_012698197.1">
    <property type="nucleotide sequence ID" value="NC_012559.1"/>
</dbReference>
<dbReference type="SMR" id="C1DDA2"/>
<dbReference type="STRING" id="557598.LHK_02753"/>
<dbReference type="KEGG" id="lhk:LHK_02753"/>
<dbReference type="eggNOG" id="COG0016">
    <property type="taxonomic scope" value="Bacteria"/>
</dbReference>
<dbReference type="HOGENOM" id="CLU_025086_0_1_4"/>
<dbReference type="Proteomes" id="UP000002010">
    <property type="component" value="Chromosome"/>
</dbReference>
<dbReference type="GO" id="GO:0005737">
    <property type="term" value="C:cytoplasm"/>
    <property type="evidence" value="ECO:0007669"/>
    <property type="project" value="UniProtKB-SubCell"/>
</dbReference>
<dbReference type="GO" id="GO:0005524">
    <property type="term" value="F:ATP binding"/>
    <property type="evidence" value="ECO:0007669"/>
    <property type="project" value="UniProtKB-UniRule"/>
</dbReference>
<dbReference type="GO" id="GO:0000287">
    <property type="term" value="F:magnesium ion binding"/>
    <property type="evidence" value="ECO:0007669"/>
    <property type="project" value="UniProtKB-UniRule"/>
</dbReference>
<dbReference type="GO" id="GO:0004826">
    <property type="term" value="F:phenylalanine-tRNA ligase activity"/>
    <property type="evidence" value="ECO:0007669"/>
    <property type="project" value="UniProtKB-UniRule"/>
</dbReference>
<dbReference type="GO" id="GO:0000049">
    <property type="term" value="F:tRNA binding"/>
    <property type="evidence" value="ECO:0007669"/>
    <property type="project" value="InterPro"/>
</dbReference>
<dbReference type="GO" id="GO:0006432">
    <property type="term" value="P:phenylalanyl-tRNA aminoacylation"/>
    <property type="evidence" value="ECO:0007669"/>
    <property type="project" value="UniProtKB-UniRule"/>
</dbReference>
<dbReference type="CDD" id="cd00496">
    <property type="entry name" value="PheRS_alpha_core"/>
    <property type="match status" value="1"/>
</dbReference>
<dbReference type="FunFam" id="3.30.930.10:FF:000003">
    <property type="entry name" value="Phenylalanine--tRNA ligase alpha subunit"/>
    <property type="match status" value="1"/>
</dbReference>
<dbReference type="Gene3D" id="3.30.930.10">
    <property type="entry name" value="Bira Bifunctional Protein, Domain 2"/>
    <property type="match status" value="1"/>
</dbReference>
<dbReference type="HAMAP" id="MF_00281">
    <property type="entry name" value="Phe_tRNA_synth_alpha1"/>
    <property type="match status" value="1"/>
</dbReference>
<dbReference type="InterPro" id="IPR006195">
    <property type="entry name" value="aa-tRNA-synth_II"/>
</dbReference>
<dbReference type="InterPro" id="IPR045864">
    <property type="entry name" value="aa-tRNA-synth_II/BPL/LPL"/>
</dbReference>
<dbReference type="InterPro" id="IPR004529">
    <property type="entry name" value="Phe-tRNA-synth_IIc_asu"/>
</dbReference>
<dbReference type="InterPro" id="IPR004188">
    <property type="entry name" value="Phe-tRNA_ligase_II_N"/>
</dbReference>
<dbReference type="InterPro" id="IPR022911">
    <property type="entry name" value="Phe_tRNA_ligase_alpha1_bac"/>
</dbReference>
<dbReference type="InterPro" id="IPR002319">
    <property type="entry name" value="Phenylalanyl-tRNA_Synthase"/>
</dbReference>
<dbReference type="InterPro" id="IPR010978">
    <property type="entry name" value="tRNA-bd_arm"/>
</dbReference>
<dbReference type="NCBIfam" id="TIGR00468">
    <property type="entry name" value="pheS"/>
    <property type="match status" value="1"/>
</dbReference>
<dbReference type="PANTHER" id="PTHR11538:SF41">
    <property type="entry name" value="PHENYLALANINE--TRNA LIGASE, MITOCHONDRIAL"/>
    <property type="match status" value="1"/>
</dbReference>
<dbReference type="PANTHER" id="PTHR11538">
    <property type="entry name" value="PHENYLALANYL-TRNA SYNTHETASE"/>
    <property type="match status" value="1"/>
</dbReference>
<dbReference type="Pfam" id="PF02912">
    <property type="entry name" value="Phe_tRNA-synt_N"/>
    <property type="match status" value="1"/>
</dbReference>
<dbReference type="Pfam" id="PF01409">
    <property type="entry name" value="tRNA-synt_2d"/>
    <property type="match status" value="1"/>
</dbReference>
<dbReference type="SUPFAM" id="SSF55681">
    <property type="entry name" value="Class II aaRS and biotin synthetases"/>
    <property type="match status" value="1"/>
</dbReference>
<dbReference type="SUPFAM" id="SSF46589">
    <property type="entry name" value="tRNA-binding arm"/>
    <property type="match status" value="1"/>
</dbReference>
<dbReference type="PROSITE" id="PS50862">
    <property type="entry name" value="AA_TRNA_LIGASE_II"/>
    <property type="match status" value="1"/>
</dbReference>
<organism>
    <name type="scientific">Laribacter hongkongensis (strain HLHK9)</name>
    <dbReference type="NCBI Taxonomy" id="557598"/>
    <lineage>
        <taxon>Bacteria</taxon>
        <taxon>Pseudomonadati</taxon>
        <taxon>Pseudomonadota</taxon>
        <taxon>Betaproteobacteria</taxon>
        <taxon>Neisseriales</taxon>
        <taxon>Aquaspirillaceae</taxon>
        <taxon>Laribacter</taxon>
    </lineage>
</organism>
<proteinExistence type="inferred from homology"/>
<evidence type="ECO:0000255" key="1">
    <source>
        <dbReference type="HAMAP-Rule" id="MF_00281"/>
    </source>
</evidence>
<gene>
    <name evidence="1" type="primary">pheS</name>
    <name type="ordered locus">LHK_02753</name>
</gene>
<comment type="catalytic activity">
    <reaction evidence="1">
        <text>tRNA(Phe) + L-phenylalanine + ATP = L-phenylalanyl-tRNA(Phe) + AMP + diphosphate + H(+)</text>
        <dbReference type="Rhea" id="RHEA:19413"/>
        <dbReference type="Rhea" id="RHEA-COMP:9668"/>
        <dbReference type="Rhea" id="RHEA-COMP:9699"/>
        <dbReference type="ChEBI" id="CHEBI:15378"/>
        <dbReference type="ChEBI" id="CHEBI:30616"/>
        <dbReference type="ChEBI" id="CHEBI:33019"/>
        <dbReference type="ChEBI" id="CHEBI:58095"/>
        <dbReference type="ChEBI" id="CHEBI:78442"/>
        <dbReference type="ChEBI" id="CHEBI:78531"/>
        <dbReference type="ChEBI" id="CHEBI:456215"/>
        <dbReference type="EC" id="6.1.1.20"/>
    </reaction>
</comment>
<comment type="cofactor">
    <cofactor evidence="1">
        <name>Mg(2+)</name>
        <dbReference type="ChEBI" id="CHEBI:18420"/>
    </cofactor>
    <text evidence="1">Binds 2 magnesium ions per tetramer.</text>
</comment>
<comment type="subunit">
    <text evidence="1">Tetramer of two alpha and two beta subunits.</text>
</comment>
<comment type="subcellular location">
    <subcellularLocation>
        <location evidence="1">Cytoplasm</location>
    </subcellularLocation>
</comment>
<comment type="similarity">
    <text evidence="1">Belongs to the class-II aminoacyl-tRNA synthetase family. Phe-tRNA synthetase alpha subunit type 1 subfamily.</text>
</comment>
<name>SYFA_LARHH</name>
<reference key="1">
    <citation type="journal article" date="2009" name="PLoS Genet.">
        <title>The complete genome and proteome of Laribacter hongkongensis reveal potential mechanisms for adaptations to different temperatures and habitats.</title>
        <authorList>
            <person name="Woo P.C.Y."/>
            <person name="Lau S.K.P."/>
            <person name="Tse H."/>
            <person name="Teng J.L.L."/>
            <person name="Curreem S.O."/>
            <person name="Tsang A.K.L."/>
            <person name="Fan R.Y.Y."/>
            <person name="Wong G.K.M."/>
            <person name="Huang Y."/>
            <person name="Loman N.J."/>
            <person name="Snyder L.A.S."/>
            <person name="Cai J.J."/>
            <person name="Huang J.-D."/>
            <person name="Mak W."/>
            <person name="Pallen M.J."/>
            <person name="Lok S."/>
            <person name="Yuen K.-Y."/>
        </authorList>
    </citation>
    <scope>NUCLEOTIDE SEQUENCE [LARGE SCALE GENOMIC DNA]</scope>
    <source>
        <strain>HLHK9</strain>
    </source>
</reference>
<accession>C1DDA2</accession>
<sequence length="327" mass="36285">MSHVDTLLAEGLAAIAAVQDLNELEQVKARYLGKTGQITELLKQLGKLPPEEKKAAGATINVAKQQFEAAHNARRDALNAARLEAQLAAEALDVTLPGRGAGVGGLHPVTLTLERIASLFRSMGFEVADGPEIEDDFHNFQALNIPADHPARAMQDTFYVEGGNVLRTHTSPIQVRHMLANQPPIKIIAPGRVYRVDSDATHSPMFHQMEGLWVDDGVSFADLKATLTDFLRRFFERDDLQVRFRPSFFPFTEPSAEIDVLGKNGWLEVGGCGMVHPNVLRNVNIDPERYTGFAFGIGLDRFAMLRYGVTDLRLFFENDLSFLKQFN</sequence>
<keyword id="KW-0030">Aminoacyl-tRNA synthetase</keyword>
<keyword id="KW-0067">ATP-binding</keyword>
<keyword id="KW-0963">Cytoplasm</keyword>
<keyword id="KW-0436">Ligase</keyword>
<keyword id="KW-0460">Magnesium</keyword>
<keyword id="KW-0479">Metal-binding</keyword>
<keyword id="KW-0547">Nucleotide-binding</keyword>
<keyword id="KW-0648">Protein biosynthesis</keyword>
<keyword id="KW-1185">Reference proteome</keyword>